<keyword id="KW-0025">Alternative splicing</keyword>
<keyword id="KW-0175">Coiled coil</keyword>
<keyword id="KW-0963">Cytoplasm</keyword>
<keyword id="KW-0206">Cytoskeleton</keyword>
<keyword id="KW-1267">Proteomics identification</keyword>
<keyword id="KW-1185">Reference proteome</keyword>
<gene>
    <name type="primary">SPATC1</name>
    <name type="synonym">SPATA15</name>
    <name type="synonym">SPRN</name>
</gene>
<dbReference type="EMBL" id="AB092352">
    <property type="protein sequence ID" value="BAD08232.1"/>
    <property type="molecule type" value="mRNA"/>
</dbReference>
<dbReference type="EMBL" id="AK301710">
    <property type="protein sequence ID" value="BAG63181.1"/>
    <property type="molecule type" value="mRNA"/>
</dbReference>
<dbReference type="EMBL" id="AC109322">
    <property type="status" value="NOT_ANNOTATED_CDS"/>
    <property type="molecule type" value="Genomic_DNA"/>
</dbReference>
<dbReference type="EMBL" id="BC050390">
    <property type="protein sequence ID" value="AAH50390.1"/>
    <property type="status" value="ALT_INIT"/>
    <property type="molecule type" value="mRNA"/>
</dbReference>
<dbReference type="EMBL" id="BC053547">
    <property type="protein sequence ID" value="AAH53547.1"/>
    <property type="status" value="ALT_INIT"/>
    <property type="molecule type" value="mRNA"/>
</dbReference>
<dbReference type="CCDS" id="CCDS47937.1">
    <molecule id="Q76KD6-2"/>
</dbReference>
<dbReference type="CCDS" id="CCDS6413.2">
    <molecule id="Q76KD6-1"/>
</dbReference>
<dbReference type="RefSeq" id="NP_001127846.1">
    <molecule id="Q76KD6-2"/>
    <property type="nucleotide sequence ID" value="NM_001134374.2"/>
</dbReference>
<dbReference type="RefSeq" id="NP_940974.2">
    <molecule id="Q76KD6-1"/>
    <property type="nucleotide sequence ID" value="NM_198572.3"/>
</dbReference>
<dbReference type="SMR" id="Q76KD6"/>
<dbReference type="BioGRID" id="131991">
    <property type="interactions" value="5"/>
</dbReference>
<dbReference type="FunCoup" id="Q76KD6">
    <property type="interactions" value="31"/>
</dbReference>
<dbReference type="STRING" id="9606.ENSP00000366690"/>
<dbReference type="GlyGen" id="Q76KD6">
    <property type="glycosylation" value="3 sites"/>
</dbReference>
<dbReference type="iPTMnet" id="Q76KD6"/>
<dbReference type="PhosphoSitePlus" id="Q76KD6"/>
<dbReference type="BioMuta" id="SPATC1"/>
<dbReference type="DMDM" id="162416255"/>
<dbReference type="MassIVE" id="Q76KD6"/>
<dbReference type="PaxDb" id="9606-ENSP00000366690"/>
<dbReference type="PeptideAtlas" id="Q76KD6"/>
<dbReference type="ProteomicsDB" id="68675">
    <molecule id="Q76KD6-1"/>
</dbReference>
<dbReference type="ProteomicsDB" id="68676">
    <molecule id="Q76KD6-2"/>
</dbReference>
<dbReference type="Antibodypedia" id="43621">
    <property type="antibodies" value="100 antibodies from 20 providers"/>
</dbReference>
<dbReference type="DNASU" id="375686"/>
<dbReference type="Ensembl" id="ENST00000377470.8">
    <molecule id="Q76KD6-1"/>
    <property type="protein sequence ID" value="ENSP00000366690.3"/>
    <property type="gene ID" value="ENSG00000186583.12"/>
</dbReference>
<dbReference type="Ensembl" id="ENST00000447830.2">
    <molecule id="Q76KD6-2"/>
    <property type="protein sequence ID" value="ENSP00000387613.2"/>
    <property type="gene ID" value="ENSG00000186583.12"/>
</dbReference>
<dbReference type="GeneID" id="375686"/>
<dbReference type="KEGG" id="hsa:375686"/>
<dbReference type="MANE-Select" id="ENST00000377470.8">
    <property type="protein sequence ID" value="ENSP00000366690.3"/>
    <property type="RefSeq nucleotide sequence ID" value="NM_198572.3"/>
    <property type="RefSeq protein sequence ID" value="NP_940974.2"/>
</dbReference>
<dbReference type="UCSC" id="uc011lkw.3">
    <molecule id="Q76KD6-1"/>
    <property type="organism name" value="human"/>
</dbReference>
<dbReference type="AGR" id="HGNC:30510"/>
<dbReference type="CTD" id="375686"/>
<dbReference type="DisGeNET" id="375686"/>
<dbReference type="GeneCards" id="SPATC1"/>
<dbReference type="HGNC" id="HGNC:30510">
    <property type="gene designation" value="SPATC1"/>
</dbReference>
<dbReference type="HPA" id="ENSG00000186583">
    <property type="expression patterns" value="Tissue enriched (testis)"/>
</dbReference>
<dbReference type="MIM" id="610874">
    <property type="type" value="gene"/>
</dbReference>
<dbReference type="neXtProt" id="NX_Q76KD6"/>
<dbReference type="OpenTargets" id="ENSG00000186583"/>
<dbReference type="PharmGKB" id="PA134907641"/>
<dbReference type="VEuPathDB" id="HostDB:ENSG00000186583"/>
<dbReference type="eggNOG" id="ENOG502RYNF">
    <property type="taxonomic scope" value="Eukaryota"/>
</dbReference>
<dbReference type="GeneTree" id="ENSGT00520000055666"/>
<dbReference type="HOGENOM" id="CLU_033431_1_0_1"/>
<dbReference type="InParanoid" id="Q76KD6"/>
<dbReference type="OMA" id="NDHKLDE"/>
<dbReference type="OrthoDB" id="6114770at2759"/>
<dbReference type="PAN-GO" id="Q76KD6">
    <property type="GO annotations" value="1 GO annotation based on evolutionary models"/>
</dbReference>
<dbReference type="PhylomeDB" id="Q76KD6"/>
<dbReference type="TreeFam" id="TF329273"/>
<dbReference type="PathwayCommons" id="Q76KD6"/>
<dbReference type="SignaLink" id="Q76KD6"/>
<dbReference type="BioGRID-ORCS" id="375686">
    <property type="hits" value="11 hits in 1151 CRISPR screens"/>
</dbReference>
<dbReference type="CD-CODE" id="8C2F96ED">
    <property type="entry name" value="Centrosome"/>
</dbReference>
<dbReference type="ChiTaRS" id="SPATC1">
    <property type="organism name" value="human"/>
</dbReference>
<dbReference type="GenomeRNAi" id="375686"/>
<dbReference type="Pharos" id="Q76KD6">
    <property type="development level" value="Tdark"/>
</dbReference>
<dbReference type="PRO" id="PR:Q76KD6"/>
<dbReference type="Proteomes" id="UP000005640">
    <property type="component" value="Chromosome 8"/>
</dbReference>
<dbReference type="RNAct" id="Q76KD6">
    <property type="molecule type" value="protein"/>
</dbReference>
<dbReference type="Bgee" id="ENSG00000186583">
    <property type="expression patterns" value="Expressed in right testis and 87 other cell types or tissues"/>
</dbReference>
<dbReference type="ExpressionAtlas" id="Q76KD6">
    <property type="expression patterns" value="baseline and differential"/>
</dbReference>
<dbReference type="GO" id="GO:0005813">
    <property type="term" value="C:centrosome"/>
    <property type="evidence" value="ECO:0000314"/>
    <property type="project" value="MGI"/>
</dbReference>
<dbReference type="GO" id="GO:0005737">
    <property type="term" value="C:cytoplasm"/>
    <property type="evidence" value="ECO:0007669"/>
    <property type="project" value="UniProtKB-SubCell"/>
</dbReference>
<dbReference type="InterPro" id="IPR026715">
    <property type="entry name" value="SPATC1"/>
</dbReference>
<dbReference type="InterPro" id="IPR029384">
    <property type="entry name" value="Speriolin_C"/>
</dbReference>
<dbReference type="InterPro" id="IPR029385">
    <property type="entry name" value="Speriolin_N"/>
</dbReference>
<dbReference type="PANTHER" id="PTHR22192">
    <property type="entry name" value="SPERIOLIN"/>
    <property type="match status" value="1"/>
</dbReference>
<dbReference type="PANTHER" id="PTHR22192:SF16">
    <property type="entry name" value="SPERIOLIN"/>
    <property type="match status" value="1"/>
</dbReference>
<dbReference type="Pfam" id="PF15059">
    <property type="entry name" value="Speriolin_C"/>
    <property type="match status" value="1"/>
</dbReference>
<dbReference type="Pfam" id="PF15058">
    <property type="entry name" value="Speriolin_N"/>
    <property type="match status" value="1"/>
</dbReference>
<accession>Q76KD6</accession>
<accession>B4DWW9</accession>
<accession>Q5U5I8</accession>
<accession>Q7Z6L7</accession>
<feature type="chain" id="PRO_0000312300" description="Speriolin">
    <location>
        <begin position="1"/>
        <end position="591"/>
    </location>
</feature>
<feature type="region of interest" description="Necessary for targeting centrosomes" evidence="1">
    <location>
        <begin position="1"/>
        <end position="78"/>
    </location>
</feature>
<feature type="region of interest" description="Disordered" evidence="3">
    <location>
        <begin position="302"/>
        <end position="331"/>
    </location>
</feature>
<feature type="region of interest" description="Disordered" evidence="3">
    <location>
        <begin position="346"/>
        <end position="435"/>
    </location>
</feature>
<feature type="coiled-coil region" evidence="2">
    <location>
        <begin position="1"/>
        <end position="42"/>
    </location>
</feature>
<feature type="compositionally biased region" description="Polar residues" evidence="3">
    <location>
        <begin position="302"/>
        <end position="314"/>
    </location>
</feature>
<feature type="compositionally biased region" description="Low complexity" evidence="3">
    <location>
        <begin position="317"/>
        <end position="331"/>
    </location>
</feature>
<feature type="compositionally biased region" description="Polar residues" evidence="3">
    <location>
        <begin position="346"/>
        <end position="357"/>
    </location>
</feature>
<feature type="compositionally biased region" description="Polar residues" evidence="3">
    <location>
        <begin position="390"/>
        <end position="401"/>
    </location>
</feature>
<feature type="splice variant" id="VSP_042815" description="In isoform 2." evidence="5">
    <original>ESKQLA</original>
    <variation>GFPEPQ</variation>
    <location>
        <begin position="436"/>
        <end position="441"/>
    </location>
</feature>
<feature type="splice variant" id="VSP_042816" description="In isoform 2." evidence="5">
    <location>
        <begin position="442"/>
        <end position="591"/>
    </location>
</feature>
<feature type="sequence conflict" description="In Ref. 1; BAD08232 and 4; AAH50390." evidence="6" ref="1 4">
    <original>S</original>
    <variation>P</variation>
    <location>
        <position position="65"/>
    </location>
</feature>
<feature type="sequence conflict" description="In Ref. 4; AAH53547." evidence="6" ref="4">
    <original>V</original>
    <variation>A</variation>
    <location>
        <position position="473"/>
    </location>
</feature>
<protein>
    <recommendedName>
        <fullName>Speriolin</fullName>
    </recommendedName>
    <alternativeName>
        <fullName>Spermatogenesis and centriole-associated protein 1</fullName>
    </alternativeName>
    <alternativeName>
        <fullName>Spermatogenesis-associated protein 15</fullName>
    </alternativeName>
    <alternativeName>
        <fullName>Spermatogenic cell-specific Cdc20-binding protein</fullName>
    </alternativeName>
</protein>
<reference key="1">
    <citation type="journal article" date="2004" name="J. Biol. Chem.">
        <title>Speriolin is a novel spermatogenic cell-specific centrosomal protein associated with the seventh WD motif of Cdc20.</title>
        <authorList>
            <person name="Goto M."/>
            <person name="Eddy E.M."/>
        </authorList>
    </citation>
    <scope>NUCLEOTIDE SEQUENCE [MRNA] (ISOFORM 1)</scope>
    <source>
        <tissue>Testis</tissue>
    </source>
</reference>
<reference key="2">
    <citation type="journal article" date="2004" name="Nat. Genet.">
        <title>Complete sequencing and characterization of 21,243 full-length human cDNAs.</title>
        <authorList>
            <person name="Ota T."/>
            <person name="Suzuki Y."/>
            <person name="Nishikawa T."/>
            <person name="Otsuki T."/>
            <person name="Sugiyama T."/>
            <person name="Irie R."/>
            <person name="Wakamatsu A."/>
            <person name="Hayashi K."/>
            <person name="Sato H."/>
            <person name="Nagai K."/>
            <person name="Kimura K."/>
            <person name="Makita H."/>
            <person name="Sekine M."/>
            <person name="Obayashi M."/>
            <person name="Nishi T."/>
            <person name="Shibahara T."/>
            <person name="Tanaka T."/>
            <person name="Ishii S."/>
            <person name="Yamamoto J."/>
            <person name="Saito K."/>
            <person name="Kawai Y."/>
            <person name="Isono Y."/>
            <person name="Nakamura Y."/>
            <person name="Nagahari K."/>
            <person name="Murakami K."/>
            <person name="Yasuda T."/>
            <person name="Iwayanagi T."/>
            <person name="Wagatsuma M."/>
            <person name="Shiratori A."/>
            <person name="Sudo H."/>
            <person name="Hosoiri T."/>
            <person name="Kaku Y."/>
            <person name="Kodaira H."/>
            <person name="Kondo H."/>
            <person name="Sugawara M."/>
            <person name="Takahashi M."/>
            <person name="Kanda K."/>
            <person name="Yokoi T."/>
            <person name="Furuya T."/>
            <person name="Kikkawa E."/>
            <person name="Omura Y."/>
            <person name="Abe K."/>
            <person name="Kamihara K."/>
            <person name="Katsuta N."/>
            <person name="Sato K."/>
            <person name="Tanikawa M."/>
            <person name="Yamazaki M."/>
            <person name="Ninomiya K."/>
            <person name="Ishibashi T."/>
            <person name="Yamashita H."/>
            <person name="Murakawa K."/>
            <person name="Fujimori K."/>
            <person name="Tanai H."/>
            <person name="Kimata M."/>
            <person name="Watanabe M."/>
            <person name="Hiraoka S."/>
            <person name="Chiba Y."/>
            <person name="Ishida S."/>
            <person name="Ono Y."/>
            <person name="Takiguchi S."/>
            <person name="Watanabe S."/>
            <person name="Yosida M."/>
            <person name="Hotuta T."/>
            <person name="Kusano J."/>
            <person name="Kanehori K."/>
            <person name="Takahashi-Fujii A."/>
            <person name="Hara H."/>
            <person name="Tanase T.-O."/>
            <person name="Nomura Y."/>
            <person name="Togiya S."/>
            <person name="Komai F."/>
            <person name="Hara R."/>
            <person name="Takeuchi K."/>
            <person name="Arita M."/>
            <person name="Imose N."/>
            <person name="Musashino K."/>
            <person name="Yuuki H."/>
            <person name="Oshima A."/>
            <person name="Sasaki N."/>
            <person name="Aotsuka S."/>
            <person name="Yoshikawa Y."/>
            <person name="Matsunawa H."/>
            <person name="Ichihara T."/>
            <person name="Shiohata N."/>
            <person name="Sano S."/>
            <person name="Moriya S."/>
            <person name="Momiyama H."/>
            <person name="Satoh N."/>
            <person name="Takami S."/>
            <person name="Terashima Y."/>
            <person name="Suzuki O."/>
            <person name="Nakagawa S."/>
            <person name="Senoh A."/>
            <person name="Mizoguchi H."/>
            <person name="Goto Y."/>
            <person name="Shimizu F."/>
            <person name="Wakebe H."/>
            <person name="Hishigaki H."/>
            <person name="Watanabe T."/>
            <person name="Sugiyama A."/>
            <person name="Takemoto M."/>
            <person name="Kawakami B."/>
            <person name="Yamazaki M."/>
            <person name="Watanabe K."/>
            <person name="Kumagai A."/>
            <person name="Itakura S."/>
            <person name="Fukuzumi Y."/>
            <person name="Fujimori Y."/>
            <person name="Komiyama M."/>
            <person name="Tashiro H."/>
            <person name="Tanigami A."/>
            <person name="Fujiwara T."/>
            <person name="Ono T."/>
            <person name="Yamada K."/>
            <person name="Fujii Y."/>
            <person name="Ozaki K."/>
            <person name="Hirao M."/>
            <person name="Ohmori Y."/>
            <person name="Kawabata A."/>
            <person name="Hikiji T."/>
            <person name="Kobatake N."/>
            <person name="Inagaki H."/>
            <person name="Ikema Y."/>
            <person name="Okamoto S."/>
            <person name="Okitani R."/>
            <person name="Kawakami T."/>
            <person name="Noguchi S."/>
            <person name="Itoh T."/>
            <person name="Shigeta K."/>
            <person name="Senba T."/>
            <person name="Matsumura K."/>
            <person name="Nakajima Y."/>
            <person name="Mizuno T."/>
            <person name="Morinaga M."/>
            <person name="Sasaki M."/>
            <person name="Togashi T."/>
            <person name="Oyama M."/>
            <person name="Hata H."/>
            <person name="Watanabe M."/>
            <person name="Komatsu T."/>
            <person name="Mizushima-Sugano J."/>
            <person name="Satoh T."/>
            <person name="Shirai Y."/>
            <person name="Takahashi Y."/>
            <person name="Nakagawa K."/>
            <person name="Okumura K."/>
            <person name="Nagase T."/>
            <person name="Nomura N."/>
            <person name="Kikuchi H."/>
            <person name="Masuho Y."/>
            <person name="Yamashita R."/>
            <person name="Nakai K."/>
            <person name="Yada T."/>
            <person name="Nakamura Y."/>
            <person name="Ohara O."/>
            <person name="Isogai T."/>
            <person name="Sugano S."/>
        </authorList>
    </citation>
    <scope>NUCLEOTIDE SEQUENCE [LARGE SCALE MRNA] (ISOFORM 2)</scope>
    <source>
        <tissue>Testis</tissue>
    </source>
</reference>
<reference key="3">
    <citation type="journal article" date="2006" name="Nature">
        <title>DNA sequence and analysis of human chromosome 8.</title>
        <authorList>
            <person name="Nusbaum C."/>
            <person name="Mikkelsen T.S."/>
            <person name="Zody M.C."/>
            <person name="Asakawa S."/>
            <person name="Taudien S."/>
            <person name="Garber M."/>
            <person name="Kodira C.D."/>
            <person name="Schueler M.G."/>
            <person name="Shimizu A."/>
            <person name="Whittaker C.A."/>
            <person name="Chang J.L."/>
            <person name="Cuomo C.A."/>
            <person name="Dewar K."/>
            <person name="FitzGerald M.G."/>
            <person name="Yang X."/>
            <person name="Allen N.R."/>
            <person name="Anderson S."/>
            <person name="Asakawa T."/>
            <person name="Blechschmidt K."/>
            <person name="Bloom T."/>
            <person name="Borowsky M.L."/>
            <person name="Butler J."/>
            <person name="Cook A."/>
            <person name="Corum B."/>
            <person name="DeArellano K."/>
            <person name="DeCaprio D."/>
            <person name="Dooley K.T."/>
            <person name="Dorris L. III"/>
            <person name="Engels R."/>
            <person name="Gloeckner G."/>
            <person name="Hafez N."/>
            <person name="Hagopian D.S."/>
            <person name="Hall J.L."/>
            <person name="Ishikawa S.K."/>
            <person name="Jaffe D.B."/>
            <person name="Kamat A."/>
            <person name="Kudoh J."/>
            <person name="Lehmann R."/>
            <person name="Lokitsang T."/>
            <person name="Macdonald P."/>
            <person name="Major J.E."/>
            <person name="Matthews C.D."/>
            <person name="Mauceli E."/>
            <person name="Menzel U."/>
            <person name="Mihalev A.H."/>
            <person name="Minoshima S."/>
            <person name="Murayama Y."/>
            <person name="Naylor J.W."/>
            <person name="Nicol R."/>
            <person name="Nguyen C."/>
            <person name="O'Leary S.B."/>
            <person name="O'Neill K."/>
            <person name="Parker S.C.J."/>
            <person name="Polley A."/>
            <person name="Raymond C.K."/>
            <person name="Reichwald K."/>
            <person name="Rodriguez J."/>
            <person name="Sasaki T."/>
            <person name="Schilhabel M."/>
            <person name="Siddiqui R."/>
            <person name="Smith C.L."/>
            <person name="Sneddon T.P."/>
            <person name="Talamas J.A."/>
            <person name="Tenzin P."/>
            <person name="Topham K."/>
            <person name="Venkataraman V."/>
            <person name="Wen G."/>
            <person name="Yamazaki S."/>
            <person name="Young S.K."/>
            <person name="Zeng Q."/>
            <person name="Zimmer A.R."/>
            <person name="Rosenthal A."/>
            <person name="Birren B.W."/>
            <person name="Platzer M."/>
            <person name="Shimizu N."/>
            <person name="Lander E.S."/>
        </authorList>
    </citation>
    <scope>NUCLEOTIDE SEQUENCE [LARGE SCALE GENOMIC DNA]</scope>
</reference>
<reference key="4">
    <citation type="journal article" date="2004" name="Genome Res.">
        <title>The status, quality, and expansion of the NIH full-length cDNA project: the Mammalian Gene Collection (MGC).</title>
        <authorList>
            <consortium name="The MGC Project Team"/>
        </authorList>
    </citation>
    <scope>NUCLEOTIDE SEQUENCE [LARGE SCALE MRNA] (ISOFORM 1)</scope>
    <source>
        <tissue>Brain</tissue>
    </source>
</reference>
<reference key="5">
    <citation type="journal article" date="2010" name="Hum. Reprod.">
        <title>Speriolin is a novel human and mouse sperm centrosome protein.</title>
        <authorList>
            <person name="Goto M."/>
            <person name="O'Brien D.A."/>
            <person name="Eddy E.M."/>
        </authorList>
    </citation>
    <scope>SUBCELLULAR LOCATION</scope>
    <scope>TISSUE SPECIFICITY</scope>
</reference>
<comment type="subunit">
    <text evidence="1">Found in a complex with CDC20, CDC27 and TUBG1. Interacts with CDC20 (By similarity).</text>
</comment>
<comment type="subcellular location">
    <subcellularLocation>
        <location evidence="1">Cytoplasm</location>
    </subcellularLocation>
    <subcellularLocation>
        <location evidence="1">Cytoplasm</location>
        <location evidence="1">Cytoskeleton</location>
        <location evidence="1">Microtubule organizing center</location>
        <location evidence="1">Centrosome</location>
    </subcellularLocation>
    <text evidence="1 4">Colocalizes with the centrosomal pericentrin protein PCNT1 (By similarity). Located in the connecting piece of sperm.</text>
</comment>
<comment type="alternative products">
    <event type="alternative splicing"/>
    <isoform>
        <id>Q76KD6-1</id>
        <name>1</name>
        <sequence type="displayed"/>
    </isoform>
    <isoform>
        <id>Q76KD6-2</id>
        <name>2</name>
        <sequence type="described" ref="VSP_042815 VSP_042816"/>
    </isoform>
</comment>
<comment type="tissue specificity">
    <text evidence="4">Detected only in testis.</text>
</comment>
<comment type="similarity">
    <text evidence="6">Belongs to the speriolin family.</text>
</comment>
<comment type="sequence caution" evidence="6">
    <conflict type="erroneous initiation">
        <sequence resource="EMBL-CDS" id="AAH50390"/>
    </conflict>
</comment>
<comment type="sequence caution" evidence="6">
    <conflict type="erroneous initiation">
        <sequence resource="EMBL-CDS" id="AAH53547"/>
    </conflict>
</comment>
<proteinExistence type="evidence at protein level"/>
<name>SPERI_HUMAN</name>
<organism>
    <name type="scientific">Homo sapiens</name>
    <name type="common">Human</name>
    <dbReference type="NCBI Taxonomy" id="9606"/>
    <lineage>
        <taxon>Eukaryota</taxon>
        <taxon>Metazoa</taxon>
        <taxon>Chordata</taxon>
        <taxon>Craniata</taxon>
        <taxon>Vertebrata</taxon>
        <taxon>Euteleostomi</taxon>
        <taxon>Mammalia</taxon>
        <taxon>Eutheria</taxon>
        <taxon>Euarchontoglires</taxon>
        <taxon>Primates</taxon>
        <taxon>Haplorrhini</taxon>
        <taxon>Catarrhini</taxon>
        <taxon>Hominidae</taxon>
        <taxon>Homo</taxon>
    </lineage>
</organism>
<sequence>MSLLTNYEGLRHQIERLVRENEELKKLVRLIRENHELKSAIKTQAGGLGISGFTSGLGEATAGLSSRQNNGVFLPPSPAVANERVLEEVGIMALAPLAEMLTSLQPSATPGSLMSPLTGTLSTLLSGPAPTSQSSPLTSFLTSPIAGPLTGTLASSLGLPSTGTLTPSSLVAGPVAMSQSSPLIAPVMGTVAVSLSSPLLSSTATPPGVSQNLLANPMSNLVLPEAPRLRLAEPLRGGPTGPQSPACVVPTATTKVPLSTEPPQSTQDPEPLSMAFAGAPLQTSTPIGAMGTPAPKTAFSFNTSDTQAQPSAAQEQVVPASVPTSPTTSPTVTVLASAPALAPQVATSYTPSSTTHIAQGAPHPPSRMHNSPTQNLPVPHCPPHNAHSPPRTSSSPASVNDSRGPRTTEPSTKSMMEVERKLAHRKTSKFPENPRESKQLAWERLVGEIAFQLDRRILSSIFPERVRLYGFTVSNIPEKIIQASLNPSDHKLDEKLCQRLTQRYVSVMNRLQSLGYNGRVHPALTEQLVNAYGILRERPELAASEGGPYTVDFLQRVVVETVHPGMLADALLLLSCLSQLAHDDGKPMFIW</sequence>
<evidence type="ECO:0000250" key="1"/>
<evidence type="ECO:0000255" key="2"/>
<evidence type="ECO:0000256" key="3">
    <source>
        <dbReference type="SAM" id="MobiDB-lite"/>
    </source>
</evidence>
<evidence type="ECO:0000269" key="4">
    <source>
    </source>
</evidence>
<evidence type="ECO:0000303" key="5">
    <source>
    </source>
</evidence>
<evidence type="ECO:0000305" key="6"/>